<keyword id="KW-0067">ATP-binding</keyword>
<keyword id="KW-0436">Ligase</keyword>
<keyword id="KW-0547">Nucleotide-binding</keyword>
<keyword id="KW-0648">Protein biosynthesis</keyword>
<keyword id="KW-1185">Reference proteome</keyword>
<proteinExistence type="inferred from homology"/>
<gene>
    <name evidence="1" type="primary">gatC</name>
    <name type="ordered locus">RHE_CH01854</name>
</gene>
<feature type="chain" id="PRO_1000016188" description="Aspartyl/glutamyl-tRNA(Asn/Gln) amidotransferase subunit C">
    <location>
        <begin position="1"/>
        <end position="95"/>
    </location>
</feature>
<reference key="1">
    <citation type="journal article" date="2006" name="Proc. Natl. Acad. Sci. U.S.A.">
        <title>The partitioned Rhizobium etli genome: genetic and metabolic redundancy in seven interacting replicons.</title>
        <authorList>
            <person name="Gonzalez V."/>
            <person name="Santamaria R.I."/>
            <person name="Bustos P."/>
            <person name="Hernandez-Gonzalez I."/>
            <person name="Medrano-Soto A."/>
            <person name="Moreno-Hagelsieb G."/>
            <person name="Janga S.C."/>
            <person name="Ramirez M.A."/>
            <person name="Jimenez-Jacinto V."/>
            <person name="Collado-Vides J."/>
            <person name="Davila G."/>
        </authorList>
    </citation>
    <scope>NUCLEOTIDE SEQUENCE [LARGE SCALE GENOMIC DNA]</scope>
    <source>
        <strain>ATCC 51251 / DSM 11541 / JCM 21823 / NBRC 15573 / CFN 42</strain>
    </source>
</reference>
<sequence length="95" mass="10186">MSVDLATVKRVAKLARIAVSEDEANRMVGELNGILGFVEQLSEVNVDGVEAMTSVTPMAMKKRADEVTDGNKAADIVANAPVTDHNFFLVPKVVE</sequence>
<organism>
    <name type="scientific">Rhizobium etli (strain ATCC 51251 / DSM 11541 / JCM 21823 / NBRC 15573 / CFN 42)</name>
    <dbReference type="NCBI Taxonomy" id="347834"/>
    <lineage>
        <taxon>Bacteria</taxon>
        <taxon>Pseudomonadati</taxon>
        <taxon>Pseudomonadota</taxon>
        <taxon>Alphaproteobacteria</taxon>
        <taxon>Hyphomicrobiales</taxon>
        <taxon>Rhizobiaceae</taxon>
        <taxon>Rhizobium/Agrobacterium group</taxon>
        <taxon>Rhizobium</taxon>
    </lineage>
</organism>
<name>GATC_RHIEC</name>
<evidence type="ECO:0000255" key="1">
    <source>
        <dbReference type="HAMAP-Rule" id="MF_00122"/>
    </source>
</evidence>
<comment type="function">
    <text evidence="1">Allows the formation of correctly charged Asn-tRNA(Asn) or Gln-tRNA(Gln) through the transamidation of misacylated Asp-tRNA(Asn) or Glu-tRNA(Gln) in organisms which lack either or both of asparaginyl-tRNA or glutaminyl-tRNA synthetases. The reaction takes place in the presence of glutamine and ATP through an activated phospho-Asp-tRNA(Asn) or phospho-Glu-tRNA(Gln).</text>
</comment>
<comment type="catalytic activity">
    <reaction evidence="1">
        <text>L-glutamyl-tRNA(Gln) + L-glutamine + ATP + H2O = L-glutaminyl-tRNA(Gln) + L-glutamate + ADP + phosphate + H(+)</text>
        <dbReference type="Rhea" id="RHEA:17521"/>
        <dbReference type="Rhea" id="RHEA-COMP:9681"/>
        <dbReference type="Rhea" id="RHEA-COMP:9684"/>
        <dbReference type="ChEBI" id="CHEBI:15377"/>
        <dbReference type="ChEBI" id="CHEBI:15378"/>
        <dbReference type="ChEBI" id="CHEBI:29985"/>
        <dbReference type="ChEBI" id="CHEBI:30616"/>
        <dbReference type="ChEBI" id="CHEBI:43474"/>
        <dbReference type="ChEBI" id="CHEBI:58359"/>
        <dbReference type="ChEBI" id="CHEBI:78520"/>
        <dbReference type="ChEBI" id="CHEBI:78521"/>
        <dbReference type="ChEBI" id="CHEBI:456216"/>
    </reaction>
</comment>
<comment type="catalytic activity">
    <reaction evidence="1">
        <text>L-aspartyl-tRNA(Asn) + L-glutamine + ATP + H2O = L-asparaginyl-tRNA(Asn) + L-glutamate + ADP + phosphate + 2 H(+)</text>
        <dbReference type="Rhea" id="RHEA:14513"/>
        <dbReference type="Rhea" id="RHEA-COMP:9674"/>
        <dbReference type="Rhea" id="RHEA-COMP:9677"/>
        <dbReference type="ChEBI" id="CHEBI:15377"/>
        <dbReference type="ChEBI" id="CHEBI:15378"/>
        <dbReference type="ChEBI" id="CHEBI:29985"/>
        <dbReference type="ChEBI" id="CHEBI:30616"/>
        <dbReference type="ChEBI" id="CHEBI:43474"/>
        <dbReference type="ChEBI" id="CHEBI:58359"/>
        <dbReference type="ChEBI" id="CHEBI:78515"/>
        <dbReference type="ChEBI" id="CHEBI:78516"/>
        <dbReference type="ChEBI" id="CHEBI:456216"/>
    </reaction>
</comment>
<comment type="subunit">
    <text evidence="1">Heterotrimer of A, B and C subunits.</text>
</comment>
<comment type="similarity">
    <text evidence="1">Belongs to the GatC family.</text>
</comment>
<dbReference type="EC" id="6.3.5.-" evidence="1"/>
<dbReference type="EMBL" id="CP000133">
    <property type="protein sequence ID" value="ABC90646.1"/>
    <property type="molecule type" value="Genomic_DNA"/>
</dbReference>
<dbReference type="RefSeq" id="WP_011425142.1">
    <property type="nucleotide sequence ID" value="NC_007761.1"/>
</dbReference>
<dbReference type="SMR" id="Q2K940"/>
<dbReference type="GeneID" id="66146066"/>
<dbReference type="KEGG" id="ret:RHE_CH01854"/>
<dbReference type="eggNOG" id="COG0721">
    <property type="taxonomic scope" value="Bacteria"/>
</dbReference>
<dbReference type="HOGENOM" id="CLU_105899_2_0_5"/>
<dbReference type="OrthoDB" id="9794326at2"/>
<dbReference type="Proteomes" id="UP000001936">
    <property type="component" value="Chromosome"/>
</dbReference>
<dbReference type="GO" id="GO:0050566">
    <property type="term" value="F:asparaginyl-tRNA synthase (glutamine-hydrolyzing) activity"/>
    <property type="evidence" value="ECO:0007669"/>
    <property type="project" value="RHEA"/>
</dbReference>
<dbReference type="GO" id="GO:0005524">
    <property type="term" value="F:ATP binding"/>
    <property type="evidence" value="ECO:0007669"/>
    <property type="project" value="UniProtKB-KW"/>
</dbReference>
<dbReference type="GO" id="GO:0050567">
    <property type="term" value="F:glutaminyl-tRNA synthase (glutamine-hydrolyzing) activity"/>
    <property type="evidence" value="ECO:0007669"/>
    <property type="project" value="UniProtKB-UniRule"/>
</dbReference>
<dbReference type="GO" id="GO:0070681">
    <property type="term" value="P:glutaminyl-tRNAGln biosynthesis via transamidation"/>
    <property type="evidence" value="ECO:0007669"/>
    <property type="project" value="TreeGrafter"/>
</dbReference>
<dbReference type="GO" id="GO:0006450">
    <property type="term" value="P:regulation of translational fidelity"/>
    <property type="evidence" value="ECO:0007669"/>
    <property type="project" value="InterPro"/>
</dbReference>
<dbReference type="GO" id="GO:0006412">
    <property type="term" value="P:translation"/>
    <property type="evidence" value="ECO:0007669"/>
    <property type="project" value="UniProtKB-UniRule"/>
</dbReference>
<dbReference type="Gene3D" id="1.10.20.60">
    <property type="entry name" value="Glu-tRNAGln amidotransferase C subunit, N-terminal domain"/>
    <property type="match status" value="1"/>
</dbReference>
<dbReference type="HAMAP" id="MF_00122">
    <property type="entry name" value="GatC"/>
    <property type="match status" value="1"/>
</dbReference>
<dbReference type="InterPro" id="IPR036113">
    <property type="entry name" value="Asp/Glu-ADT_sf_sub_c"/>
</dbReference>
<dbReference type="InterPro" id="IPR003837">
    <property type="entry name" value="GatC"/>
</dbReference>
<dbReference type="NCBIfam" id="TIGR00135">
    <property type="entry name" value="gatC"/>
    <property type="match status" value="1"/>
</dbReference>
<dbReference type="PANTHER" id="PTHR15004">
    <property type="entry name" value="GLUTAMYL-TRNA(GLN) AMIDOTRANSFERASE SUBUNIT C, MITOCHONDRIAL"/>
    <property type="match status" value="1"/>
</dbReference>
<dbReference type="PANTHER" id="PTHR15004:SF0">
    <property type="entry name" value="GLUTAMYL-TRNA(GLN) AMIDOTRANSFERASE SUBUNIT C, MITOCHONDRIAL"/>
    <property type="match status" value="1"/>
</dbReference>
<dbReference type="Pfam" id="PF02686">
    <property type="entry name" value="GatC"/>
    <property type="match status" value="1"/>
</dbReference>
<dbReference type="SUPFAM" id="SSF141000">
    <property type="entry name" value="Glu-tRNAGln amidotransferase C subunit"/>
    <property type="match status" value="1"/>
</dbReference>
<accession>Q2K940</accession>
<protein>
    <recommendedName>
        <fullName evidence="1">Aspartyl/glutamyl-tRNA(Asn/Gln) amidotransferase subunit C</fullName>
        <shortName evidence="1">Asp/Glu-ADT subunit C</shortName>
        <ecNumber evidence="1">6.3.5.-</ecNumber>
    </recommendedName>
</protein>